<accession>Q6MG56</accession>
<protein>
    <recommendedName>
        <fullName>Lymphocyte antigen 6 complex locus protein G6f</fullName>
    </recommendedName>
</protein>
<keyword id="KW-1003">Cell membrane</keyword>
<keyword id="KW-1015">Disulfide bond</keyword>
<keyword id="KW-0325">Glycoprotein</keyword>
<keyword id="KW-0393">Immunoglobulin domain</keyword>
<keyword id="KW-0472">Membrane</keyword>
<keyword id="KW-0597">Phosphoprotein</keyword>
<keyword id="KW-1185">Reference proteome</keyword>
<keyword id="KW-0732">Signal</keyword>
<keyword id="KW-0812">Transmembrane</keyword>
<keyword id="KW-1133">Transmembrane helix</keyword>
<gene>
    <name type="primary">Ly6g6f</name>
    <name type="synonym">G6f</name>
</gene>
<proteinExistence type="inferred from homology"/>
<evidence type="ECO:0000250" key="1"/>
<evidence type="ECO:0000250" key="2">
    <source>
        <dbReference type="UniProtKB" id="Q5SQ64"/>
    </source>
</evidence>
<evidence type="ECO:0000255" key="3"/>
<evidence type="ECO:0000255" key="4">
    <source>
        <dbReference type="PROSITE-ProRule" id="PRU00114"/>
    </source>
</evidence>
<comment type="function">
    <text evidence="1">May play a role in the downstream signal transduction pathways involving GRB2 and GRB7.</text>
</comment>
<comment type="subunit">
    <text evidence="1">Homodimer; disulfide-linked. Interacts with GRB2 and GRB7 in a phosphorylation-dependent manner (By similarity).</text>
</comment>
<comment type="subcellular location">
    <subcellularLocation>
        <location evidence="1">Cell membrane</location>
        <topology evidence="1">Single-pass type I membrane protein</topology>
    </subcellularLocation>
</comment>
<comment type="PTM">
    <text evidence="1">N-glycosylated.</text>
</comment>
<dbReference type="EMBL" id="BX883045">
    <property type="protein sequence ID" value="CAE83990.1"/>
    <property type="molecule type" value="Genomic_DNA"/>
</dbReference>
<dbReference type="RefSeq" id="NP_001003691.1">
    <property type="nucleotide sequence ID" value="NM_001003691.1"/>
</dbReference>
<dbReference type="FunCoup" id="Q6MG56">
    <property type="interactions" value="397"/>
</dbReference>
<dbReference type="STRING" id="10116.ENSRNOP00000068053"/>
<dbReference type="GlyCosmos" id="Q6MG56">
    <property type="glycosylation" value="1 site, No reported glycans"/>
</dbReference>
<dbReference type="GlyGen" id="Q6MG56">
    <property type="glycosylation" value="1 site"/>
</dbReference>
<dbReference type="PhosphoSitePlus" id="Q6MG56"/>
<dbReference type="PaxDb" id="10116-ENSRNOP00000068053"/>
<dbReference type="GeneID" id="309609"/>
<dbReference type="KEGG" id="rno:309609"/>
<dbReference type="UCSC" id="RGD:1303333">
    <property type="organism name" value="rat"/>
</dbReference>
<dbReference type="AGR" id="RGD:1303333"/>
<dbReference type="CTD" id="259215"/>
<dbReference type="RGD" id="1303333">
    <property type="gene designation" value="Ly6g6f"/>
</dbReference>
<dbReference type="eggNOG" id="ENOG502SNF5">
    <property type="taxonomic scope" value="Eukaryota"/>
</dbReference>
<dbReference type="InParanoid" id="Q6MG56"/>
<dbReference type="OrthoDB" id="85346at9989"/>
<dbReference type="PhylomeDB" id="Q6MG56"/>
<dbReference type="Reactome" id="R-RNO-114608">
    <property type="pathway name" value="Platelet degranulation"/>
</dbReference>
<dbReference type="PRO" id="PR:Q6MG56"/>
<dbReference type="Proteomes" id="UP000002494">
    <property type="component" value="Unplaced"/>
</dbReference>
<dbReference type="GO" id="GO:0005886">
    <property type="term" value="C:plasma membrane"/>
    <property type="evidence" value="ECO:0007669"/>
    <property type="project" value="UniProtKB-SubCell"/>
</dbReference>
<dbReference type="Gene3D" id="2.60.40.10">
    <property type="entry name" value="Immunoglobulins"/>
    <property type="match status" value="1"/>
</dbReference>
<dbReference type="InterPro" id="IPR007110">
    <property type="entry name" value="Ig-like_dom"/>
</dbReference>
<dbReference type="InterPro" id="IPR036179">
    <property type="entry name" value="Ig-like_dom_sf"/>
</dbReference>
<dbReference type="InterPro" id="IPR013783">
    <property type="entry name" value="Ig-like_fold"/>
</dbReference>
<dbReference type="InterPro" id="IPR003599">
    <property type="entry name" value="Ig_sub"/>
</dbReference>
<dbReference type="InterPro" id="IPR013106">
    <property type="entry name" value="Ig_V-set"/>
</dbReference>
<dbReference type="InterPro" id="IPR026524">
    <property type="entry name" value="LY6G6d/LY6G6f"/>
</dbReference>
<dbReference type="PANTHER" id="PTHR32286">
    <property type="entry name" value="LYMPHOCYTE ANTIGEN 6 COMPLEX LOCUS PROTEIN G6F"/>
    <property type="match status" value="1"/>
</dbReference>
<dbReference type="PANTHER" id="PTHR32286:SF10">
    <property type="entry name" value="LYMPHOCYTE ANTIGEN 6 COMPLEX LOCUS PROTEIN G6F"/>
    <property type="match status" value="1"/>
</dbReference>
<dbReference type="Pfam" id="PF07686">
    <property type="entry name" value="V-set"/>
    <property type="match status" value="1"/>
</dbReference>
<dbReference type="SMART" id="SM00409">
    <property type="entry name" value="IG"/>
    <property type="match status" value="1"/>
</dbReference>
<dbReference type="SUPFAM" id="SSF48726">
    <property type="entry name" value="Immunoglobulin"/>
    <property type="match status" value="1"/>
</dbReference>
<dbReference type="PROSITE" id="PS50835">
    <property type="entry name" value="IG_LIKE"/>
    <property type="match status" value="1"/>
</dbReference>
<organism>
    <name type="scientific">Rattus norvegicus</name>
    <name type="common">Rat</name>
    <dbReference type="NCBI Taxonomy" id="10116"/>
    <lineage>
        <taxon>Eukaryota</taxon>
        <taxon>Metazoa</taxon>
        <taxon>Chordata</taxon>
        <taxon>Craniata</taxon>
        <taxon>Vertebrata</taxon>
        <taxon>Euteleostomi</taxon>
        <taxon>Mammalia</taxon>
        <taxon>Eutheria</taxon>
        <taxon>Euarchontoglires</taxon>
        <taxon>Glires</taxon>
        <taxon>Rodentia</taxon>
        <taxon>Myomorpha</taxon>
        <taxon>Muroidea</taxon>
        <taxon>Muridae</taxon>
        <taxon>Murinae</taxon>
        <taxon>Rattus</taxon>
    </lineage>
</organism>
<feature type="signal peptide" evidence="3">
    <location>
        <begin position="1"/>
        <end position="19"/>
    </location>
</feature>
<feature type="chain" id="PRO_0000318924" description="Lymphocyte antigen 6 complex locus protein G6f">
    <location>
        <begin position="20"/>
        <end position="293"/>
    </location>
</feature>
<feature type="topological domain" description="Extracellular" evidence="3">
    <location>
        <begin position="20"/>
        <end position="237"/>
    </location>
</feature>
<feature type="transmembrane region" description="Helical" evidence="3">
    <location>
        <begin position="238"/>
        <end position="258"/>
    </location>
</feature>
<feature type="topological domain" description="Cytoplasmic" evidence="3">
    <location>
        <begin position="259"/>
        <end position="293"/>
    </location>
</feature>
<feature type="domain" description="Ig-like V-type">
    <location>
        <begin position="20"/>
        <end position="124"/>
    </location>
</feature>
<feature type="modified residue" description="Phosphotyrosine" evidence="2">
    <location>
        <position position="284"/>
    </location>
</feature>
<feature type="glycosylation site" description="N-linked (GlcNAc...) asparagine" evidence="3">
    <location>
        <position position="90"/>
    </location>
</feature>
<feature type="disulfide bond" evidence="4">
    <location>
        <begin position="37"/>
        <end position="108"/>
    </location>
</feature>
<reference key="1">
    <citation type="journal article" date="2004" name="Genome Res.">
        <title>The genomic sequence and comparative analysis of the rat major histocompatibility complex.</title>
        <authorList>
            <person name="Hurt P."/>
            <person name="Walter L."/>
            <person name="Sudbrak R."/>
            <person name="Klages S."/>
            <person name="Mueller I."/>
            <person name="Shiina T."/>
            <person name="Inoko H."/>
            <person name="Lehrach H."/>
            <person name="Guenther E."/>
            <person name="Reinhardt R."/>
            <person name="Himmelbauer H."/>
        </authorList>
    </citation>
    <scope>NUCLEOTIDE SEQUENCE [LARGE SCALE GENOMIC DNA]</scope>
    <source>
        <strain>Brown Norway</strain>
    </source>
</reference>
<sequence length="293" mass="32615">MAMVVFLLLYLCGHPQAAADNIQTLYVPSGESMEMPCPSPPSLLGGQLLTWFRSPVSGSSTILVAQVQVDRPISDLGKADPDSRFKVLGNYSLRLEGSRDEDAGRYWCTVMDQNHKYQNWRVYDVSVLKGSQFSVKSPDGLSCSALLCSVVPARRLDSVTWLEGRNPVRGHAQYFWGEGAALLLVCPTEGVPETRSRRPRNIRCLMPQNKRFSFSVAAPAEPPPTVCAPLPSWDVSWILMLLFAAGQGVTIIALSIVIWRHQRAQGTQDREPSIPHFKPEVQVYENIHLARLR</sequence>
<name>LY66F_RAT</name>